<sequence>MVQHITLHDMTLRDGMHPKRHQISLEQMKDIARGLDAAGVPLIEVTHGDGLGGASVNYGFPAHSDEEYLRAVLGELKQARVSALLLPGIGTVDHLRMAHEIGVHTIRVATHCTEADVSEQHIGMARKLGMDTVGFLMMAHMAPVQTLVQQALLMESYGANCLYITDSAGHMLPHDVTEKLGAVRQALRPETELGFHGHHNLAMGVANSLAAIACGASRIDAAAAGLGAGAGNTPMEVLVAVCERMGIETGVDVYRIADVAEDLVVPIMDHPIRIDRDALTLGYAGVYSSFLLFAKRAEAKYRIPAREILVELGRQRLVGGQEDMIEDTAITLARERGLLVP</sequence>
<accession>Q0K3N2</accession>
<dbReference type="EC" id="4.1.3.39" evidence="1"/>
<dbReference type="EMBL" id="AM260480">
    <property type="protein sequence ID" value="CAJ95392.1"/>
    <property type="molecule type" value="Genomic_DNA"/>
</dbReference>
<dbReference type="SMR" id="Q0K3N2"/>
<dbReference type="STRING" id="381666.H16_B0595"/>
<dbReference type="KEGG" id="reh:H16_B0595"/>
<dbReference type="eggNOG" id="COG0119">
    <property type="taxonomic scope" value="Bacteria"/>
</dbReference>
<dbReference type="HOGENOM" id="CLU_049173_0_0_4"/>
<dbReference type="OrthoDB" id="9803573at2"/>
<dbReference type="Proteomes" id="UP000008210">
    <property type="component" value="Chromosome 2"/>
</dbReference>
<dbReference type="GO" id="GO:0003852">
    <property type="term" value="F:2-isopropylmalate synthase activity"/>
    <property type="evidence" value="ECO:0007669"/>
    <property type="project" value="TreeGrafter"/>
</dbReference>
<dbReference type="GO" id="GO:0008701">
    <property type="term" value="F:4-hydroxy-2-oxovalerate aldolase activity"/>
    <property type="evidence" value="ECO:0007669"/>
    <property type="project" value="UniProtKB-UniRule"/>
</dbReference>
<dbReference type="GO" id="GO:0030145">
    <property type="term" value="F:manganese ion binding"/>
    <property type="evidence" value="ECO:0007669"/>
    <property type="project" value="UniProtKB-UniRule"/>
</dbReference>
<dbReference type="GO" id="GO:0009056">
    <property type="term" value="P:catabolic process"/>
    <property type="evidence" value="ECO:0007669"/>
    <property type="project" value="UniProtKB-KW"/>
</dbReference>
<dbReference type="GO" id="GO:0009098">
    <property type="term" value="P:L-leucine biosynthetic process"/>
    <property type="evidence" value="ECO:0007669"/>
    <property type="project" value="TreeGrafter"/>
</dbReference>
<dbReference type="CDD" id="cd07943">
    <property type="entry name" value="DRE_TIM_HOA"/>
    <property type="match status" value="1"/>
</dbReference>
<dbReference type="Gene3D" id="1.10.8.60">
    <property type="match status" value="1"/>
</dbReference>
<dbReference type="Gene3D" id="3.20.20.70">
    <property type="entry name" value="Aldolase class I"/>
    <property type="match status" value="1"/>
</dbReference>
<dbReference type="HAMAP" id="MF_01656">
    <property type="entry name" value="HOA"/>
    <property type="match status" value="1"/>
</dbReference>
<dbReference type="InterPro" id="IPR050073">
    <property type="entry name" value="2-IPM_HCS-like"/>
</dbReference>
<dbReference type="InterPro" id="IPR017629">
    <property type="entry name" value="4OH_2_O-val_aldolase"/>
</dbReference>
<dbReference type="InterPro" id="IPR013785">
    <property type="entry name" value="Aldolase_TIM"/>
</dbReference>
<dbReference type="InterPro" id="IPR012425">
    <property type="entry name" value="DmpG_comm"/>
</dbReference>
<dbReference type="InterPro" id="IPR035685">
    <property type="entry name" value="DRE_TIM_HOA"/>
</dbReference>
<dbReference type="InterPro" id="IPR000891">
    <property type="entry name" value="PYR_CT"/>
</dbReference>
<dbReference type="NCBIfam" id="TIGR03217">
    <property type="entry name" value="4OH_2_O_val_ald"/>
    <property type="match status" value="1"/>
</dbReference>
<dbReference type="NCBIfam" id="NF006049">
    <property type="entry name" value="PRK08195.1"/>
    <property type="match status" value="1"/>
</dbReference>
<dbReference type="PANTHER" id="PTHR10277:SF9">
    <property type="entry name" value="2-ISOPROPYLMALATE SYNTHASE 1, CHLOROPLASTIC-RELATED"/>
    <property type="match status" value="1"/>
</dbReference>
<dbReference type="PANTHER" id="PTHR10277">
    <property type="entry name" value="HOMOCITRATE SYNTHASE-RELATED"/>
    <property type="match status" value="1"/>
</dbReference>
<dbReference type="Pfam" id="PF07836">
    <property type="entry name" value="DmpG_comm"/>
    <property type="match status" value="1"/>
</dbReference>
<dbReference type="Pfam" id="PF00682">
    <property type="entry name" value="HMGL-like"/>
    <property type="match status" value="1"/>
</dbReference>
<dbReference type="SUPFAM" id="SSF51569">
    <property type="entry name" value="Aldolase"/>
    <property type="match status" value="1"/>
</dbReference>
<dbReference type="SUPFAM" id="SSF89000">
    <property type="entry name" value="post-HMGL domain-like"/>
    <property type="match status" value="1"/>
</dbReference>
<dbReference type="PROSITE" id="PS50991">
    <property type="entry name" value="PYR_CT"/>
    <property type="match status" value="1"/>
</dbReference>
<evidence type="ECO:0000255" key="1">
    <source>
        <dbReference type="HAMAP-Rule" id="MF_01656"/>
    </source>
</evidence>
<keyword id="KW-0058">Aromatic hydrocarbons catabolism</keyword>
<keyword id="KW-0456">Lyase</keyword>
<keyword id="KW-0464">Manganese</keyword>
<keyword id="KW-0479">Metal-binding</keyword>
<keyword id="KW-1185">Reference proteome</keyword>
<protein>
    <recommendedName>
        <fullName evidence="1">4-hydroxy-2-oxovalerate aldolase 3</fullName>
        <shortName evidence="1">HOA 3</shortName>
        <ecNumber evidence="1">4.1.3.39</ecNumber>
    </recommendedName>
    <alternativeName>
        <fullName evidence="1">4-hydroxy-2-keto-pentanoic acid aldolase 3</fullName>
    </alternativeName>
    <alternativeName>
        <fullName evidence="1">4-hydroxy-2-oxopentanoate aldolase 3</fullName>
    </alternativeName>
</protein>
<organism>
    <name type="scientific">Cupriavidus necator (strain ATCC 17699 / DSM 428 / KCTC 22496 / NCIMB 10442 / H16 / Stanier 337)</name>
    <name type="common">Ralstonia eutropha</name>
    <dbReference type="NCBI Taxonomy" id="381666"/>
    <lineage>
        <taxon>Bacteria</taxon>
        <taxon>Pseudomonadati</taxon>
        <taxon>Pseudomonadota</taxon>
        <taxon>Betaproteobacteria</taxon>
        <taxon>Burkholderiales</taxon>
        <taxon>Burkholderiaceae</taxon>
        <taxon>Cupriavidus</taxon>
    </lineage>
</organism>
<gene>
    <name type="primary">bpHI</name>
    <name type="ordered locus">H16_B0595</name>
</gene>
<proteinExistence type="inferred from homology"/>
<name>HOA3_CUPNH</name>
<feature type="chain" id="PRO_0000387885" description="4-hydroxy-2-oxovalerate aldolase 3">
    <location>
        <begin position="1"/>
        <end position="341"/>
    </location>
</feature>
<feature type="domain" description="Pyruvate carboxyltransferase" evidence="1">
    <location>
        <begin position="5"/>
        <end position="257"/>
    </location>
</feature>
<feature type="active site" description="Proton acceptor" evidence="1">
    <location>
        <position position="17"/>
    </location>
</feature>
<feature type="binding site" evidence="1">
    <location>
        <begin position="13"/>
        <end position="14"/>
    </location>
    <ligand>
        <name>substrate</name>
    </ligand>
</feature>
<feature type="binding site" evidence="1">
    <location>
        <position position="14"/>
    </location>
    <ligand>
        <name>Mn(2+)</name>
        <dbReference type="ChEBI" id="CHEBI:29035"/>
    </ligand>
</feature>
<feature type="binding site" evidence="1">
    <location>
        <position position="167"/>
    </location>
    <ligand>
        <name>substrate</name>
    </ligand>
</feature>
<feature type="binding site" evidence="1">
    <location>
        <position position="196"/>
    </location>
    <ligand>
        <name>Mn(2+)</name>
        <dbReference type="ChEBI" id="CHEBI:29035"/>
    </ligand>
</feature>
<feature type="binding site" evidence="1">
    <location>
        <position position="196"/>
    </location>
    <ligand>
        <name>substrate</name>
    </ligand>
</feature>
<feature type="binding site" evidence="1">
    <location>
        <position position="198"/>
    </location>
    <ligand>
        <name>Mn(2+)</name>
        <dbReference type="ChEBI" id="CHEBI:29035"/>
    </ligand>
</feature>
<feature type="binding site" evidence="1">
    <location>
        <position position="287"/>
    </location>
    <ligand>
        <name>substrate</name>
    </ligand>
</feature>
<feature type="site" description="Transition state stabilizer" evidence="1">
    <location>
        <position position="13"/>
    </location>
</feature>
<comment type="catalytic activity">
    <reaction evidence="1">
        <text>(S)-4-hydroxy-2-oxopentanoate = acetaldehyde + pyruvate</text>
        <dbReference type="Rhea" id="RHEA:22624"/>
        <dbReference type="ChEBI" id="CHEBI:15343"/>
        <dbReference type="ChEBI" id="CHEBI:15361"/>
        <dbReference type="ChEBI" id="CHEBI:73143"/>
        <dbReference type="EC" id="4.1.3.39"/>
    </reaction>
</comment>
<comment type="similarity">
    <text evidence="1">Belongs to the 4-hydroxy-2-oxovalerate aldolase family.</text>
</comment>
<reference key="1">
    <citation type="journal article" date="2006" name="Nat. Biotechnol.">
        <title>Genome sequence of the bioplastic-producing 'Knallgas' bacterium Ralstonia eutropha H16.</title>
        <authorList>
            <person name="Pohlmann A."/>
            <person name="Fricke W.F."/>
            <person name="Reinecke F."/>
            <person name="Kusian B."/>
            <person name="Liesegang H."/>
            <person name="Cramm R."/>
            <person name="Eitinger T."/>
            <person name="Ewering C."/>
            <person name="Poetter M."/>
            <person name="Schwartz E."/>
            <person name="Strittmatter A."/>
            <person name="Voss I."/>
            <person name="Gottschalk G."/>
            <person name="Steinbuechel A."/>
            <person name="Friedrich B."/>
            <person name="Bowien B."/>
        </authorList>
    </citation>
    <scope>NUCLEOTIDE SEQUENCE [LARGE SCALE GENOMIC DNA]</scope>
    <source>
        <strain>ATCC 17699 / DSM 428 / KCTC 22496 / NCIMB 10442 / H16 / Stanier 337</strain>
    </source>
</reference>